<organismHost>
    <name type="scientific">Acheta domesticus</name>
    <name type="common">House cricket</name>
    <dbReference type="NCBI Taxonomy" id="6997"/>
</organismHost>
<organismHost>
    <name type="scientific">Chilo suppressalis</name>
    <name type="common">Asiatic rice borer moth</name>
    <dbReference type="NCBI Taxonomy" id="168631"/>
</organismHost>
<organismHost>
    <name type="scientific">Gryllus bimaculatus</name>
    <name type="common">Two-spotted cricket</name>
    <dbReference type="NCBI Taxonomy" id="6999"/>
</organismHost>
<organismHost>
    <name type="scientific">Gryllus campestris</name>
    <dbReference type="NCBI Taxonomy" id="58607"/>
</organismHost>
<organismHost>
    <name type="scientific">Spodoptera frugiperda</name>
    <name type="common">Fall armyworm</name>
    <dbReference type="NCBI Taxonomy" id="7108"/>
</organismHost>
<accession>O55748</accession>
<organism>
    <name type="scientific">Invertebrate iridescent virus 6</name>
    <name type="common">IIV-6</name>
    <name type="synonym">Chilo iridescent virus</name>
    <dbReference type="NCBI Taxonomy" id="176652"/>
    <lineage>
        <taxon>Viruses</taxon>
        <taxon>Varidnaviria</taxon>
        <taxon>Bamfordvirae</taxon>
        <taxon>Nucleocytoviricota</taxon>
        <taxon>Megaviricetes</taxon>
        <taxon>Pimascovirales</taxon>
        <taxon>Iridoviridae</taxon>
        <taxon>Betairidovirinae</taxon>
        <taxon>Iridovirus</taxon>
    </lineage>
</organism>
<keyword id="KW-0255">Endonuclease</keyword>
<keyword id="KW-0378">Hydrolase</keyword>
<keyword id="KW-0540">Nuclease</keyword>
<keyword id="KW-1185">Reference proteome</keyword>
<keyword id="KW-0694">RNA-binding</keyword>
<dbReference type="EC" id="3.1.26.3"/>
<dbReference type="EMBL" id="AF303741">
    <property type="protein sequence ID" value="AAB94459.1"/>
    <property type="molecule type" value="Genomic_DNA"/>
</dbReference>
<dbReference type="PIR" id="T03085">
    <property type="entry name" value="T03085"/>
</dbReference>
<dbReference type="RefSeq" id="NP_149605.1">
    <property type="nucleotide sequence ID" value="NC_003038.1"/>
</dbReference>
<dbReference type="SMR" id="O55748"/>
<dbReference type="KEGG" id="vg:1733045"/>
<dbReference type="OrthoDB" id="8486at10239"/>
<dbReference type="Proteomes" id="UP000001359">
    <property type="component" value="Genome"/>
</dbReference>
<dbReference type="GO" id="GO:0004525">
    <property type="term" value="F:ribonuclease III activity"/>
    <property type="evidence" value="ECO:0007669"/>
    <property type="project" value="UniProtKB-EC"/>
</dbReference>
<dbReference type="GO" id="GO:0003723">
    <property type="term" value="F:RNA binding"/>
    <property type="evidence" value="ECO:0007669"/>
    <property type="project" value="UniProtKB-KW"/>
</dbReference>
<dbReference type="GO" id="GO:0006396">
    <property type="term" value="P:RNA processing"/>
    <property type="evidence" value="ECO:0007669"/>
    <property type="project" value="InterPro"/>
</dbReference>
<dbReference type="Gene3D" id="3.30.160.20">
    <property type="match status" value="1"/>
</dbReference>
<dbReference type="Gene3D" id="1.10.1520.10">
    <property type="entry name" value="Ribonuclease III domain"/>
    <property type="match status" value="1"/>
</dbReference>
<dbReference type="InterPro" id="IPR014720">
    <property type="entry name" value="dsRBD_dom"/>
</dbReference>
<dbReference type="InterPro" id="IPR000999">
    <property type="entry name" value="RNase_III_dom"/>
</dbReference>
<dbReference type="InterPro" id="IPR036389">
    <property type="entry name" value="RNase_III_sf"/>
</dbReference>
<dbReference type="Pfam" id="PF00636">
    <property type="entry name" value="Ribonuclease_3"/>
    <property type="match status" value="1"/>
</dbReference>
<dbReference type="SMART" id="SM00535">
    <property type="entry name" value="RIBOc"/>
    <property type="match status" value="1"/>
</dbReference>
<dbReference type="SUPFAM" id="SSF54768">
    <property type="entry name" value="dsRNA-binding domain-like"/>
    <property type="match status" value="1"/>
</dbReference>
<dbReference type="SUPFAM" id="SSF69065">
    <property type="entry name" value="RNase III domain-like"/>
    <property type="match status" value="1"/>
</dbReference>
<dbReference type="PROSITE" id="PS50137">
    <property type="entry name" value="DS_RBD"/>
    <property type="match status" value="1"/>
</dbReference>
<dbReference type="PROSITE" id="PS50142">
    <property type="entry name" value="RNASE_3_2"/>
    <property type="match status" value="1"/>
</dbReference>
<gene>
    <name type="ORF">IIV6-142R</name>
</gene>
<reference key="1">
    <citation type="journal article" date="2001" name="Virology">
        <title>Analysis of the first complete DNA sequence of an invertebrate iridovirus: coding strategy of the genome of Chilo iridescent virus.</title>
        <authorList>
            <person name="Jakob N.J."/>
            <person name="Mueller K."/>
            <person name="Bahr U."/>
            <person name="Darai G."/>
        </authorList>
    </citation>
    <scope>NUCLEOTIDE SEQUENCE [LARGE SCALE GENOMIC DNA]</scope>
</reference>
<reference key="2">
    <citation type="journal article" date="2007" name="Virol. J.">
        <title>Comparative genomic analysis of the family Iridoviridae: re-annotating and defining the core set of iridovirus genes.</title>
        <authorList>
            <person name="Eaton H.E."/>
            <person name="Metcalf J."/>
            <person name="Penny E."/>
            <person name="Tcherepanov V."/>
            <person name="Upton C."/>
            <person name="Brunetti C.R."/>
        </authorList>
    </citation>
    <scope>GENOME REANNOTATION</scope>
</reference>
<evidence type="ECO:0000250" key="1"/>
<evidence type="ECO:0000255" key="2">
    <source>
        <dbReference type="PROSITE-ProRule" id="PRU00177"/>
    </source>
</evidence>
<evidence type="ECO:0000255" key="3">
    <source>
        <dbReference type="PROSITE-ProRule" id="PRU00266"/>
    </source>
</evidence>
<evidence type="ECO:0000305" key="4"/>
<sequence>MENNIENFDPSLVYFGDRGQDFKKMIRSILSLGMSDEYIPYLTTPESLNTYNTAFTSRGADDKNNYEMFEQLGDVSVNKFIVNYMYKRFPQLRNPNGVDVVAKLKIKYASKNQLQMLSESLDMWRFITATYDERTNKKKPLLEDTFESFFGATEWLIDSFIEDIALKQGNNNTYVGVGYNIINGILTTLFDRINISLKYENLVDAKTRFNEVIAEQKSIIGDVKYEDEYKNGKHTSKIYRYPPNSNLKELLGIGTGTLKRDAQEQAASRALETLALKHNIIKEAPDRFKAFM</sequence>
<name>RNC_IIV6</name>
<proteinExistence type="inferred from homology"/>
<comment type="function">
    <text evidence="1">Digests double-stranded RNA.</text>
</comment>
<comment type="catalytic activity">
    <reaction>
        <text>Endonucleolytic cleavage to 5'-phosphomonoester.</text>
        <dbReference type="EC" id="3.1.26.3"/>
    </reaction>
</comment>
<comment type="similarity">
    <text evidence="4">Belongs to the IIV-6 142R family.</text>
</comment>
<protein>
    <recommendedName>
        <fullName>Putative ribonuclease 3</fullName>
        <ecNumber>3.1.26.3</ecNumber>
    </recommendedName>
    <alternativeName>
        <fullName>Ribonuclease III</fullName>
        <shortName>RNase III</shortName>
    </alternativeName>
</protein>
<feature type="chain" id="PRO_0000376954" description="Putative ribonuclease 3">
    <location>
        <begin position="1"/>
        <end position="292"/>
    </location>
</feature>
<feature type="domain" description="RNase III" evidence="2">
    <location>
        <begin position="32"/>
        <end position="158"/>
    </location>
</feature>
<feature type="domain" description="DRBM" evidence="3">
    <location>
        <begin position="204"/>
        <end position="276"/>
    </location>
</feature>